<feature type="chain" id="PRO_0000368549" description="ATP synthase subunit b">
    <location>
        <begin position="1"/>
        <end position="172"/>
    </location>
</feature>
<feature type="transmembrane region" description="Helical" evidence="1">
    <location>
        <begin position="12"/>
        <end position="32"/>
    </location>
</feature>
<feature type="region of interest" description="Disordered" evidence="2">
    <location>
        <begin position="63"/>
        <end position="131"/>
    </location>
</feature>
<feature type="compositionally biased region" description="Basic and acidic residues" evidence="2">
    <location>
        <begin position="63"/>
        <end position="74"/>
    </location>
</feature>
<feature type="compositionally biased region" description="Basic and acidic residues" evidence="2">
    <location>
        <begin position="116"/>
        <end position="131"/>
    </location>
</feature>
<reference key="1">
    <citation type="journal article" date="2008" name="DNA Res.">
        <title>Comparative genome analysis of Lactobacillus reuteri and Lactobacillus fermentum reveal a genomic island for reuterin and cobalamin production.</title>
        <authorList>
            <person name="Morita H."/>
            <person name="Toh H."/>
            <person name="Fukuda S."/>
            <person name="Horikawa H."/>
            <person name="Oshima K."/>
            <person name="Suzuki T."/>
            <person name="Murakami M."/>
            <person name="Hisamatsu S."/>
            <person name="Kato Y."/>
            <person name="Takizawa T."/>
            <person name="Fukuoka H."/>
            <person name="Yoshimura T."/>
            <person name="Itoh K."/>
            <person name="O'Sullivan D.J."/>
            <person name="McKay L.L."/>
            <person name="Ohno H."/>
            <person name="Kikuchi J."/>
            <person name="Masaoka T."/>
            <person name="Hattori M."/>
        </authorList>
    </citation>
    <scope>NUCLEOTIDE SEQUENCE [LARGE SCALE GENOMIC DNA]</scope>
    <source>
        <strain>JCM 1112</strain>
    </source>
</reference>
<name>ATPF_LIMRJ</name>
<comment type="function">
    <text evidence="1">F(1)F(0) ATP synthase produces ATP from ADP in the presence of a proton or sodium gradient. F-type ATPases consist of two structural domains, F(1) containing the extramembraneous catalytic core and F(0) containing the membrane proton channel, linked together by a central stalk and a peripheral stalk. During catalysis, ATP synthesis in the catalytic domain of F(1) is coupled via a rotary mechanism of the central stalk subunits to proton translocation.</text>
</comment>
<comment type="function">
    <text evidence="1">Component of the F(0) channel, it forms part of the peripheral stalk, linking F(1) to F(0).</text>
</comment>
<comment type="subunit">
    <text evidence="1">F-type ATPases have 2 components, F(1) - the catalytic core - and F(0) - the membrane proton channel. F(1) has five subunits: alpha(3), beta(3), gamma(1), delta(1), epsilon(1). F(0) has three main subunits: a(1), b(2) and c(10-14). The alpha and beta chains form an alternating ring which encloses part of the gamma chain. F(1) is attached to F(0) by a central stalk formed by the gamma and epsilon chains, while a peripheral stalk is formed by the delta and b chains.</text>
</comment>
<comment type="subcellular location">
    <subcellularLocation>
        <location evidence="1">Cell membrane</location>
        <topology evidence="1">Single-pass membrane protein</topology>
    </subcellularLocation>
</comment>
<comment type="similarity">
    <text evidence="1">Belongs to the ATPase B chain family.</text>
</comment>
<keyword id="KW-0066">ATP synthesis</keyword>
<keyword id="KW-1003">Cell membrane</keyword>
<keyword id="KW-0138">CF(0)</keyword>
<keyword id="KW-0375">Hydrogen ion transport</keyword>
<keyword id="KW-0406">Ion transport</keyword>
<keyword id="KW-0472">Membrane</keyword>
<keyword id="KW-0812">Transmembrane</keyword>
<keyword id="KW-1133">Transmembrane helix</keyword>
<keyword id="KW-0813">Transport</keyword>
<dbReference type="EMBL" id="AP007281">
    <property type="protein sequence ID" value="BAG24969.1"/>
    <property type="molecule type" value="Genomic_DNA"/>
</dbReference>
<dbReference type="RefSeq" id="WP_003666564.1">
    <property type="nucleotide sequence ID" value="NC_010609.1"/>
</dbReference>
<dbReference type="SMR" id="B2G687"/>
<dbReference type="GeneID" id="77192082"/>
<dbReference type="KEGG" id="lrf:LAR_0453"/>
<dbReference type="HOGENOM" id="CLU_079215_4_2_9"/>
<dbReference type="GO" id="GO:0005886">
    <property type="term" value="C:plasma membrane"/>
    <property type="evidence" value="ECO:0007669"/>
    <property type="project" value="UniProtKB-SubCell"/>
</dbReference>
<dbReference type="GO" id="GO:0045259">
    <property type="term" value="C:proton-transporting ATP synthase complex"/>
    <property type="evidence" value="ECO:0007669"/>
    <property type="project" value="UniProtKB-KW"/>
</dbReference>
<dbReference type="GO" id="GO:0046933">
    <property type="term" value="F:proton-transporting ATP synthase activity, rotational mechanism"/>
    <property type="evidence" value="ECO:0007669"/>
    <property type="project" value="UniProtKB-UniRule"/>
</dbReference>
<dbReference type="GO" id="GO:0046961">
    <property type="term" value="F:proton-transporting ATPase activity, rotational mechanism"/>
    <property type="evidence" value="ECO:0007669"/>
    <property type="project" value="TreeGrafter"/>
</dbReference>
<dbReference type="CDD" id="cd06503">
    <property type="entry name" value="ATP-synt_Fo_b"/>
    <property type="match status" value="1"/>
</dbReference>
<dbReference type="Gene3D" id="6.10.250.1580">
    <property type="match status" value="1"/>
</dbReference>
<dbReference type="HAMAP" id="MF_01398">
    <property type="entry name" value="ATP_synth_b_bprime"/>
    <property type="match status" value="1"/>
</dbReference>
<dbReference type="InterPro" id="IPR028987">
    <property type="entry name" value="ATP_synth_B-like_membr_sf"/>
</dbReference>
<dbReference type="InterPro" id="IPR002146">
    <property type="entry name" value="ATP_synth_b/b'su_bac/chlpt"/>
</dbReference>
<dbReference type="InterPro" id="IPR005864">
    <property type="entry name" value="ATP_synth_F0_bsu_bac"/>
</dbReference>
<dbReference type="InterPro" id="IPR050059">
    <property type="entry name" value="ATP_synthase_B_chain"/>
</dbReference>
<dbReference type="NCBIfam" id="TIGR01144">
    <property type="entry name" value="ATP_synt_b"/>
    <property type="match status" value="1"/>
</dbReference>
<dbReference type="PANTHER" id="PTHR33445:SF1">
    <property type="entry name" value="ATP SYNTHASE SUBUNIT B"/>
    <property type="match status" value="1"/>
</dbReference>
<dbReference type="PANTHER" id="PTHR33445">
    <property type="entry name" value="ATP SYNTHASE SUBUNIT B', CHLOROPLASTIC"/>
    <property type="match status" value="1"/>
</dbReference>
<dbReference type="Pfam" id="PF00430">
    <property type="entry name" value="ATP-synt_B"/>
    <property type="match status" value="1"/>
</dbReference>
<dbReference type="SUPFAM" id="SSF81573">
    <property type="entry name" value="F1F0 ATP synthase subunit B, membrane domain"/>
    <property type="match status" value="1"/>
</dbReference>
<gene>
    <name evidence="1" type="primary">atpF</name>
    <name type="ordered locus">LAR_0453</name>
</gene>
<sequence length="172" mass="19254">MFVNSVLAESNSLYIGDLVFYIVTFIILMLLVKHFAWKPVTDMMKKRADKIANDIDNAARSRESAEKMAAKRQAELQSSRQEAAEIVSNAKKSGETQRAQIVETAQKDAQALKQQAQKDAEQARRDALNSAKDDVANLSIEIASKLIQKELKADDQKELIDSYIEGLVEHES</sequence>
<organism>
    <name type="scientific">Limosilactobacillus reuteri subsp. reuteri (strain JCM 1112)</name>
    <name type="common">Lactobacillus reuteri</name>
    <dbReference type="NCBI Taxonomy" id="557433"/>
    <lineage>
        <taxon>Bacteria</taxon>
        <taxon>Bacillati</taxon>
        <taxon>Bacillota</taxon>
        <taxon>Bacilli</taxon>
        <taxon>Lactobacillales</taxon>
        <taxon>Lactobacillaceae</taxon>
        <taxon>Limosilactobacillus</taxon>
    </lineage>
</organism>
<evidence type="ECO:0000255" key="1">
    <source>
        <dbReference type="HAMAP-Rule" id="MF_01398"/>
    </source>
</evidence>
<evidence type="ECO:0000256" key="2">
    <source>
        <dbReference type="SAM" id="MobiDB-lite"/>
    </source>
</evidence>
<proteinExistence type="inferred from homology"/>
<protein>
    <recommendedName>
        <fullName evidence="1">ATP synthase subunit b</fullName>
    </recommendedName>
    <alternativeName>
        <fullName evidence="1">ATP synthase F(0) sector subunit b</fullName>
    </alternativeName>
    <alternativeName>
        <fullName evidence="1">ATPase subunit I</fullName>
    </alternativeName>
    <alternativeName>
        <fullName evidence="1">F-type ATPase subunit b</fullName>
        <shortName evidence="1">F-ATPase subunit b</shortName>
    </alternativeName>
</protein>
<accession>B2G687</accession>